<feature type="chain" id="PRO_1000147185" description="Ureidoglycolate lyase">
    <location>
        <begin position="1"/>
        <end position="160"/>
    </location>
</feature>
<sequence length="160" mass="18223">MKLQVLPLSQEAFSAYGDVIETQKRDFFHINNGLVERYHDLALVEILEQDRTLISINRAQPANLPLTIHELERHPLGTQAFIPMKGEVFVVVVALGDDKPDLSTLRAFITNGEQGVNYHRNVWHHPLFAWQRVTDFLTIDRGGSDNCDVESIPEQELCFA</sequence>
<keyword id="KW-0456">Lyase</keyword>
<keyword id="KW-0659">Purine metabolism</keyword>
<keyword id="KW-1185">Reference proteome</keyword>
<comment type="function">
    <text evidence="1">Catalyzes the catabolism of the allantoin degradation intermediate (S)-ureidoglycolate, generating urea and glyoxylate. Involved in the anaerobic utilization of allantoin as sole nitrogen source. Reinforces the induction of genes involved in the degradation of allantoin and glyoxylate by producing glyoxylate.</text>
</comment>
<comment type="catalytic activity">
    <reaction evidence="1">
        <text>(S)-ureidoglycolate = urea + glyoxylate</text>
        <dbReference type="Rhea" id="RHEA:11304"/>
        <dbReference type="ChEBI" id="CHEBI:16199"/>
        <dbReference type="ChEBI" id="CHEBI:36655"/>
        <dbReference type="ChEBI" id="CHEBI:57296"/>
        <dbReference type="EC" id="4.3.2.3"/>
    </reaction>
</comment>
<comment type="cofactor">
    <cofactor evidence="1">
        <name>Ni(2+)</name>
        <dbReference type="ChEBI" id="CHEBI:49786"/>
    </cofactor>
</comment>
<comment type="pathway">
    <text evidence="1">Nitrogen metabolism; (S)-allantoin degradation.</text>
</comment>
<comment type="subunit">
    <text evidence="1">Homodimer.</text>
</comment>
<comment type="similarity">
    <text evidence="1">Belongs to the ureidoglycolate lyase family.</text>
</comment>
<gene>
    <name evidence="1" type="primary">allA</name>
    <name type="ordered locus">E2348C_0439</name>
</gene>
<accession>B7UKI3</accession>
<name>ALLA_ECO27</name>
<reference key="1">
    <citation type="journal article" date="2009" name="J. Bacteriol.">
        <title>Complete genome sequence and comparative genome analysis of enteropathogenic Escherichia coli O127:H6 strain E2348/69.</title>
        <authorList>
            <person name="Iguchi A."/>
            <person name="Thomson N.R."/>
            <person name="Ogura Y."/>
            <person name="Saunders D."/>
            <person name="Ooka T."/>
            <person name="Henderson I.R."/>
            <person name="Harris D."/>
            <person name="Asadulghani M."/>
            <person name="Kurokawa K."/>
            <person name="Dean P."/>
            <person name="Kenny B."/>
            <person name="Quail M.A."/>
            <person name="Thurston S."/>
            <person name="Dougan G."/>
            <person name="Hayashi T."/>
            <person name="Parkhill J."/>
            <person name="Frankel G."/>
        </authorList>
    </citation>
    <scope>NUCLEOTIDE SEQUENCE [LARGE SCALE GENOMIC DNA]</scope>
    <source>
        <strain>E2348/69 / EPEC</strain>
    </source>
</reference>
<dbReference type="EC" id="4.3.2.3" evidence="1"/>
<dbReference type="EMBL" id="FM180568">
    <property type="protein sequence ID" value="CAS07987.1"/>
    <property type="molecule type" value="Genomic_DNA"/>
</dbReference>
<dbReference type="RefSeq" id="WP_000776372.1">
    <property type="nucleotide sequence ID" value="NC_011601.1"/>
</dbReference>
<dbReference type="SMR" id="B7UKI3"/>
<dbReference type="KEGG" id="ecg:E2348C_0439"/>
<dbReference type="HOGENOM" id="CLU_070848_1_1_6"/>
<dbReference type="UniPathway" id="UPA00395"/>
<dbReference type="Proteomes" id="UP000008205">
    <property type="component" value="Chromosome"/>
</dbReference>
<dbReference type="GO" id="GO:0004848">
    <property type="term" value="F:ureidoglycolate hydrolase activity"/>
    <property type="evidence" value="ECO:0007669"/>
    <property type="project" value="InterPro"/>
</dbReference>
<dbReference type="GO" id="GO:0050385">
    <property type="term" value="F:ureidoglycolate lyase activity"/>
    <property type="evidence" value="ECO:0007669"/>
    <property type="project" value="UniProtKB-UniRule"/>
</dbReference>
<dbReference type="GO" id="GO:0000256">
    <property type="term" value="P:allantoin catabolic process"/>
    <property type="evidence" value="ECO:0007669"/>
    <property type="project" value="UniProtKB-UniRule"/>
</dbReference>
<dbReference type="GO" id="GO:0006145">
    <property type="term" value="P:purine nucleobase catabolic process"/>
    <property type="evidence" value="ECO:0007669"/>
    <property type="project" value="UniProtKB-UniRule"/>
</dbReference>
<dbReference type="CDD" id="cd20298">
    <property type="entry name" value="cupin_UAH"/>
    <property type="match status" value="1"/>
</dbReference>
<dbReference type="FunFam" id="2.60.120.480:FF:000001">
    <property type="entry name" value="Ureidoglycolate lyase"/>
    <property type="match status" value="1"/>
</dbReference>
<dbReference type="Gene3D" id="2.60.120.480">
    <property type="entry name" value="Ureidoglycolate hydrolase"/>
    <property type="match status" value="1"/>
</dbReference>
<dbReference type="HAMAP" id="MF_00616">
    <property type="entry name" value="Ureidogly_lyase"/>
    <property type="match status" value="1"/>
</dbReference>
<dbReference type="InterPro" id="IPR011051">
    <property type="entry name" value="RmlC_Cupin_sf"/>
</dbReference>
<dbReference type="InterPro" id="IPR047233">
    <property type="entry name" value="UAH_cupin"/>
</dbReference>
<dbReference type="InterPro" id="IPR007247">
    <property type="entry name" value="Ureidogly_lyase"/>
</dbReference>
<dbReference type="InterPro" id="IPR023525">
    <property type="entry name" value="Ureidogly_lyase_bac"/>
</dbReference>
<dbReference type="InterPro" id="IPR024060">
    <property type="entry name" value="Ureidoglycolate_lyase_dom_sf"/>
</dbReference>
<dbReference type="NCBIfam" id="NF002948">
    <property type="entry name" value="PRK03606.1-1"/>
    <property type="match status" value="1"/>
</dbReference>
<dbReference type="NCBIfam" id="NF009932">
    <property type="entry name" value="PRK13395.1"/>
    <property type="match status" value="1"/>
</dbReference>
<dbReference type="PANTHER" id="PTHR21221">
    <property type="entry name" value="UREIDOGLYCOLATE HYDROLASE"/>
    <property type="match status" value="1"/>
</dbReference>
<dbReference type="PANTHER" id="PTHR21221:SF1">
    <property type="entry name" value="UREIDOGLYCOLATE LYASE"/>
    <property type="match status" value="1"/>
</dbReference>
<dbReference type="Pfam" id="PF04115">
    <property type="entry name" value="Ureidogly_lyase"/>
    <property type="match status" value="1"/>
</dbReference>
<dbReference type="PIRSF" id="PIRSF017306">
    <property type="entry name" value="Ureidogly_hydro"/>
    <property type="match status" value="1"/>
</dbReference>
<dbReference type="SUPFAM" id="SSF51182">
    <property type="entry name" value="RmlC-like cupins"/>
    <property type="match status" value="1"/>
</dbReference>
<protein>
    <recommendedName>
        <fullName evidence="1">Ureidoglycolate lyase</fullName>
        <ecNumber evidence="1">4.3.2.3</ecNumber>
    </recommendedName>
    <alternativeName>
        <fullName evidence="1">Ureidoglycolatase</fullName>
    </alternativeName>
</protein>
<organism>
    <name type="scientific">Escherichia coli O127:H6 (strain E2348/69 / EPEC)</name>
    <dbReference type="NCBI Taxonomy" id="574521"/>
    <lineage>
        <taxon>Bacteria</taxon>
        <taxon>Pseudomonadati</taxon>
        <taxon>Pseudomonadota</taxon>
        <taxon>Gammaproteobacteria</taxon>
        <taxon>Enterobacterales</taxon>
        <taxon>Enterobacteriaceae</taxon>
        <taxon>Escherichia</taxon>
    </lineage>
</organism>
<evidence type="ECO:0000255" key="1">
    <source>
        <dbReference type="HAMAP-Rule" id="MF_00616"/>
    </source>
</evidence>
<proteinExistence type="inferred from homology"/>